<keyword id="KW-0472">Membrane</keyword>
<keyword id="KW-1185">Reference proteome</keyword>
<keyword id="KW-0812">Transmembrane</keyword>
<keyword id="KW-1133">Transmembrane helix</keyword>
<name>YC20L_ARATH</name>
<accession>O80813</accession>
<accession>Q1ECF8</accession>
<accession>Q8L9U6</accession>
<reference key="1">
    <citation type="journal article" date="2000" name="Nature">
        <title>Sequence and analysis of chromosome 1 of the plant Arabidopsis thaliana.</title>
        <authorList>
            <person name="Theologis A."/>
            <person name="Ecker J.R."/>
            <person name="Palm C.J."/>
            <person name="Federspiel N.A."/>
            <person name="Kaul S."/>
            <person name="White O."/>
            <person name="Alonso J."/>
            <person name="Altafi H."/>
            <person name="Araujo R."/>
            <person name="Bowman C.L."/>
            <person name="Brooks S.Y."/>
            <person name="Buehler E."/>
            <person name="Chan A."/>
            <person name="Chao Q."/>
            <person name="Chen H."/>
            <person name="Cheuk R.F."/>
            <person name="Chin C.W."/>
            <person name="Chung M.K."/>
            <person name="Conn L."/>
            <person name="Conway A.B."/>
            <person name="Conway A.R."/>
            <person name="Creasy T.H."/>
            <person name="Dewar K."/>
            <person name="Dunn P."/>
            <person name="Etgu P."/>
            <person name="Feldblyum T.V."/>
            <person name="Feng J.-D."/>
            <person name="Fong B."/>
            <person name="Fujii C.Y."/>
            <person name="Gill J.E."/>
            <person name="Goldsmith A.D."/>
            <person name="Haas B."/>
            <person name="Hansen N.F."/>
            <person name="Hughes B."/>
            <person name="Huizar L."/>
            <person name="Hunter J.L."/>
            <person name="Jenkins J."/>
            <person name="Johnson-Hopson C."/>
            <person name="Khan S."/>
            <person name="Khaykin E."/>
            <person name="Kim C.J."/>
            <person name="Koo H.L."/>
            <person name="Kremenetskaia I."/>
            <person name="Kurtz D.B."/>
            <person name="Kwan A."/>
            <person name="Lam B."/>
            <person name="Langin-Hooper S."/>
            <person name="Lee A."/>
            <person name="Lee J.M."/>
            <person name="Lenz C.A."/>
            <person name="Li J.H."/>
            <person name="Li Y.-P."/>
            <person name="Lin X."/>
            <person name="Liu S.X."/>
            <person name="Liu Z.A."/>
            <person name="Luros J.S."/>
            <person name="Maiti R."/>
            <person name="Marziali A."/>
            <person name="Militscher J."/>
            <person name="Miranda M."/>
            <person name="Nguyen M."/>
            <person name="Nierman W.C."/>
            <person name="Osborne B.I."/>
            <person name="Pai G."/>
            <person name="Peterson J."/>
            <person name="Pham P.K."/>
            <person name="Rizzo M."/>
            <person name="Rooney T."/>
            <person name="Rowley D."/>
            <person name="Sakano H."/>
            <person name="Salzberg S.L."/>
            <person name="Schwartz J.R."/>
            <person name="Shinn P."/>
            <person name="Southwick A.M."/>
            <person name="Sun H."/>
            <person name="Tallon L.J."/>
            <person name="Tambunga G."/>
            <person name="Toriumi M.J."/>
            <person name="Town C.D."/>
            <person name="Utterback T."/>
            <person name="Van Aken S."/>
            <person name="Vaysberg M."/>
            <person name="Vysotskaia V.S."/>
            <person name="Walker M."/>
            <person name="Wu D."/>
            <person name="Yu G."/>
            <person name="Fraser C.M."/>
            <person name="Venter J.C."/>
            <person name="Davis R.W."/>
        </authorList>
    </citation>
    <scope>NUCLEOTIDE SEQUENCE [LARGE SCALE GENOMIC DNA]</scope>
    <source>
        <strain>cv. Columbia</strain>
    </source>
</reference>
<reference key="2">
    <citation type="journal article" date="2017" name="Plant J.">
        <title>Araport11: a complete reannotation of the Arabidopsis thaliana reference genome.</title>
        <authorList>
            <person name="Cheng C.Y."/>
            <person name="Krishnakumar V."/>
            <person name="Chan A.P."/>
            <person name="Thibaud-Nissen F."/>
            <person name="Schobel S."/>
            <person name="Town C.D."/>
        </authorList>
    </citation>
    <scope>GENOME REANNOTATION</scope>
    <source>
        <strain>cv. Columbia</strain>
    </source>
</reference>
<reference key="3">
    <citation type="submission" date="2006-06" db="EMBL/GenBank/DDBJ databases">
        <title>Arabidopsis ORF clones.</title>
        <authorList>
            <person name="Kim C.J."/>
            <person name="Chen H."/>
            <person name="Quinitio C."/>
            <person name="Shinn P."/>
            <person name="Ecker J.R."/>
        </authorList>
    </citation>
    <scope>NUCLEOTIDE SEQUENCE [LARGE SCALE MRNA]</scope>
    <source>
        <strain>cv. Columbia</strain>
    </source>
</reference>
<reference key="4">
    <citation type="submission" date="2002-03" db="EMBL/GenBank/DDBJ databases">
        <title>Full-length cDNA from Arabidopsis thaliana.</title>
        <authorList>
            <person name="Brover V.V."/>
            <person name="Troukhan M.E."/>
            <person name="Alexandrov N.A."/>
            <person name="Lu Y.-P."/>
            <person name="Flavell R.B."/>
            <person name="Feldmann K.A."/>
        </authorList>
    </citation>
    <scope>NUCLEOTIDE SEQUENCE [LARGE SCALE MRNA]</scope>
</reference>
<feature type="chain" id="PRO_0000217330" description="Ycf20-like protein">
    <location>
        <begin position="1"/>
        <end position="197"/>
    </location>
</feature>
<feature type="transmembrane region" description="Helical" evidence="1">
    <location>
        <begin position="113"/>
        <end position="133"/>
    </location>
</feature>
<feature type="transmembrane region" description="Helical" evidence="1">
    <location>
        <begin position="138"/>
        <end position="158"/>
    </location>
</feature>
<feature type="transmembrane region" description="Helical" evidence="1">
    <location>
        <begin position="173"/>
        <end position="193"/>
    </location>
</feature>
<feature type="sequence conflict" description="In Ref. 4; AAM65756." evidence="2" ref="4">
    <original>F</original>
    <variation>L</variation>
    <location>
        <position position="27"/>
    </location>
</feature>
<feature type="sequence conflict" description="In Ref. 4; AAM65756." evidence="2" ref="4">
    <original>IKA</original>
    <variation>RKV</variation>
    <location>
        <begin position="31"/>
        <end position="33"/>
    </location>
</feature>
<feature type="sequence conflict" description="In Ref. 4; AAM65756." evidence="2" ref="4">
    <original>G</original>
    <variation>A</variation>
    <location>
        <position position="102"/>
    </location>
</feature>
<comment type="subcellular location">
    <subcellularLocation>
        <location evidence="2">Membrane</location>
        <topology evidence="2">Multi-pass membrane protein</topology>
    </subcellularLocation>
</comment>
<comment type="similarity">
    <text evidence="2">Belongs to the ycf20 family.</text>
</comment>
<proteinExistence type="evidence at transcript level"/>
<organism>
    <name type="scientific">Arabidopsis thaliana</name>
    <name type="common">Mouse-ear cress</name>
    <dbReference type="NCBI Taxonomy" id="3702"/>
    <lineage>
        <taxon>Eukaryota</taxon>
        <taxon>Viridiplantae</taxon>
        <taxon>Streptophyta</taxon>
        <taxon>Embryophyta</taxon>
        <taxon>Tracheophyta</taxon>
        <taxon>Spermatophyta</taxon>
        <taxon>Magnoliopsida</taxon>
        <taxon>eudicotyledons</taxon>
        <taxon>Gunneridae</taxon>
        <taxon>Pentapetalae</taxon>
        <taxon>rosids</taxon>
        <taxon>malvids</taxon>
        <taxon>Brassicales</taxon>
        <taxon>Brassicaceae</taxon>
        <taxon>Camelineae</taxon>
        <taxon>Arabidopsis</taxon>
    </lineage>
</organism>
<protein>
    <recommendedName>
        <fullName>Ycf20-like protein</fullName>
    </recommendedName>
</protein>
<sequence length="197" mass="21397">MACQIQASRVFPVLEIEKGLSFMINVFHRRIKASSITLTSFPYPMKSFQIRRPNRKIAFALDTGSSIPGDSGEGQEMNGDRTGLGSTRLGRIAIAGGKQLLGKINSARKNFPMKIFLLLLGFYTANALATILGQTGDWDVLVAGIVVAAIEGIGMLMYKKPSSSMFSGKLQSFVVFMNFWKAGVCLGLFVDAFKLGS</sequence>
<gene>
    <name type="ordered locus">At1g65420</name>
    <name type="ORF">T8F5.20</name>
</gene>
<evidence type="ECO:0000255" key="1"/>
<evidence type="ECO:0000305" key="2"/>
<dbReference type="EMBL" id="AC004512">
    <property type="protein sequence ID" value="AAC27150.1"/>
    <property type="molecule type" value="Genomic_DNA"/>
</dbReference>
<dbReference type="EMBL" id="CP002684">
    <property type="protein sequence ID" value="AEE34371.1"/>
    <property type="molecule type" value="Genomic_DNA"/>
</dbReference>
<dbReference type="EMBL" id="BT025776">
    <property type="protein sequence ID" value="ABF83666.1"/>
    <property type="molecule type" value="mRNA"/>
</dbReference>
<dbReference type="EMBL" id="AY088215">
    <property type="protein sequence ID" value="AAM65756.1"/>
    <property type="molecule type" value="mRNA"/>
</dbReference>
<dbReference type="PIR" id="T02365">
    <property type="entry name" value="T02365"/>
</dbReference>
<dbReference type="FunCoup" id="O80813">
    <property type="interactions" value="292"/>
</dbReference>
<dbReference type="STRING" id="3702.O80813"/>
<dbReference type="PaxDb" id="3702-AT1G65420.1"/>
<dbReference type="EnsemblPlants" id="AT1G65420.1">
    <property type="protein sequence ID" value="AT1G65420.1"/>
    <property type="gene ID" value="AT1G65420"/>
</dbReference>
<dbReference type="GeneID" id="842853"/>
<dbReference type="Gramene" id="AT1G65420.1">
    <property type="protein sequence ID" value="AT1G65420.1"/>
    <property type="gene ID" value="AT1G65420"/>
</dbReference>
<dbReference type="KEGG" id="ath:AT1G65420"/>
<dbReference type="Araport" id="AT1G65420"/>
<dbReference type="TAIR" id="AT1G65420">
    <property type="gene designation" value="NPQ7"/>
</dbReference>
<dbReference type="eggNOG" id="ENOG502RZMD">
    <property type="taxonomic scope" value="Eukaryota"/>
</dbReference>
<dbReference type="HOGENOM" id="CLU_090160_1_1_1"/>
<dbReference type="InParanoid" id="O80813"/>
<dbReference type="OMA" id="MACQIQA"/>
<dbReference type="OrthoDB" id="1853217at2759"/>
<dbReference type="PhylomeDB" id="O80813"/>
<dbReference type="PRO" id="PR:O80813"/>
<dbReference type="Proteomes" id="UP000006548">
    <property type="component" value="Chromosome 1"/>
</dbReference>
<dbReference type="ExpressionAtlas" id="O80813">
    <property type="expression patterns" value="baseline and differential"/>
</dbReference>
<dbReference type="GO" id="GO:0009507">
    <property type="term" value="C:chloroplast"/>
    <property type="evidence" value="ECO:0000314"/>
    <property type="project" value="TAIR"/>
</dbReference>
<dbReference type="GO" id="GO:0016020">
    <property type="term" value="C:membrane"/>
    <property type="evidence" value="ECO:0007669"/>
    <property type="project" value="UniProtKB-SubCell"/>
</dbReference>
<dbReference type="GO" id="GO:0010196">
    <property type="term" value="P:nonphotochemical quenching"/>
    <property type="evidence" value="ECO:0000315"/>
    <property type="project" value="TAIR"/>
</dbReference>
<dbReference type="InterPro" id="IPR007572">
    <property type="entry name" value="Uncharacterised_Ycf20"/>
</dbReference>
<dbReference type="PANTHER" id="PTHR33787">
    <property type="match status" value="1"/>
</dbReference>
<dbReference type="PANTHER" id="PTHR33787:SF4">
    <property type="entry name" value="YCF20-LIKE PROTEIN"/>
    <property type="match status" value="1"/>
</dbReference>
<dbReference type="Pfam" id="PF04483">
    <property type="entry name" value="DUF565"/>
    <property type="match status" value="1"/>
</dbReference>